<reference key="1">
    <citation type="journal article" date="2005" name="Nature">
        <title>Sequencing of Aspergillus nidulans and comparative analysis with A. fumigatus and A. oryzae.</title>
        <authorList>
            <person name="Galagan J.E."/>
            <person name="Calvo S.E."/>
            <person name="Cuomo C."/>
            <person name="Ma L.-J."/>
            <person name="Wortman J.R."/>
            <person name="Batzoglou S."/>
            <person name="Lee S.-I."/>
            <person name="Bastuerkmen M."/>
            <person name="Spevak C.C."/>
            <person name="Clutterbuck J."/>
            <person name="Kapitonov V."/>
            <person name="Jurka J."/>
            <person name="Scazzocchio C."/>
            <person name="Farman M.L."/>
            <person name="Butler J."/>
            <person name="Purcell S."/>
            <person name="Harris S."/>
            <person name="Braus G.H."/>
            <person name="Draht O."/>
            <person name="Busch S."/>
            <person name="D'Enfert C."/>
            <person name="Bouchier C."/>
            <person name="Goldman G.H."/>
            <person name="Bell-Pedersen D."/>
            <person name="Griffiths-Jones S."/>
            <person name="Doonan J.H."/>
            <person name="Yu J."/>
            <person name="Vienken K."/>
            <person name="Pain A."/>
            <person name="Freitag M."/>
            <person name="Selker E.U."/>
            <person name="Archer D.B."/>
            <person name="Penalva M.A."/>
            <person name="Oakley B.R."/>
            <person name="Momany M."/>
            <person name="Tanaka T."/>
            <person name="Kumagai T."/>
            <person name="Asai K."/>
            <person name="Machida M."/>
            <person name="Nierman W.C."/>
            <person name="Denning D.W."/>
            <person name="Caddick M.X."/>
            <person name="Hynes M."/>
            <person name="Paoletti M."/>
            <person name="Fischer R."/>
            <person name="Miller B.L."/>
            <person name="Dyer P.S."/>
            <person name="Sachs M.S."/>
            <person name="Osmani S.A."/>
            <person name="Birren B.W."/>
        </authorList>
    </citation>
    <scope>NUCLEOTIDE SEQUENCE [LARGE SCALE GENOMIC DNA]</scope>
    <source>
        <strain>FGSC A4 / ATCC 38163 / CBS 112.46 / NRRL 194 / M139</strain>
    </source>
</reference>
<reference key="2">
    <citation type="journal article" date="2009" name="Fungal Genet. Biol.">
        <title>The 2008 update of the Aspergillus nidulans genome annotation: a community effort.</title>
        <authorList>
            <person name="Wortman J.R."/>
            <person name="Gilsenan J.M."/>
            <person name="Joardar V."/>
            <person name="Deegan J."/>
            <person name="Clutterbuck J."/>
            <person name="Andersen M.R."/>
            <person name="Archer D."/>
            <person name="Bencina M."/>
            <person name="Braus G."/>
            <person name="Coutinho P."/>
            <person name="von Dohren H."/>
            <person name="Doonan J."/>
            <person name="Driessen A.J."/>
            <person name="Durek P."/>
            <person name="Espeso E."/>
            <person name="Fekete E."/>
            <person name="Flipphi M."/>
            <person name="Estrada C.G."/>
            <person name="Geysens S."/>
            <person name="Goldman G."/>
            <person name="de Groot P.W."/>
            <person name="Hansen K."/>
            <person name="Harris S.D."/>
            <person name="Heinekamp T."/>
            <person name="Helmstaedt K."/>
            <person name="Henrissat B."/>
            <person name="Hofmann G."/>
            <person name="Homan T."/>
            <person name="Horio T."/>
            <person name="Horiuchi H."/>
            <person name="James S."/>
            <person name="Jones M."/>
            <person name="Karaffa L."/>
            <person name="Karanyi Z."/>
            <person name="Kato M."/>
            <person name="Keller N."/>
            <person name="Kelly D.E."/>
            <person name="Kiel J.A."/>
            <person name="Kim J.M."/>
            <person name="van der Klei I.J."/>
            <person name="Klis F.M."/>
            <person name="Kovalchuk A."/>
            <person name="Krasevec N."/>
            <person name="Kubicek C.P."/>
            <person name="Liu B."/>
            <person name="Maccabe A."/>
            <person name="Meyer V."/>
            <person name="Mirabito P."/>
            <person name="Miskei M."/>
            <person name="Mos M."/>
            <person name="Mullins J."/>
            <person name="Nelson D.R."/>
            <person name="Nielsen J."/>
            <person name="Oakley B.R."/>
            <person name="Osmani S.A."/>
            <person name="Pakula T."/>
            <person name="Paszewski A."/>
            <person name="Paulsen I."/>
            <person name="Pilsyk S."/>
            <person name="Pocsi I."/>
            <person name="Punt P.J."/>
            <person name="Ram A.F."/>
            <person name="Ren Q."/>
            <person name="Robellet X."/>
            <person name="Robson G."/>
            <person name="Seiboth B."/>
            <person name="van Solingen P."/>
            <person name="Specht T."/>
            <person name="Sun J."/>
            <person name="Taheri-Talesh N."/>
            <person name="Takeshita N."/>
            <person name="Ussery D."/>
            <person name="vanKuyk P.A."/>
            <person name="Visser H."/>
            <person name="van de Vondervoort P.J."/>
            <person name="de Vries R.P."/>
            <person name="Walton J."/>
            <person name="Xiang X."/>
            <person name="Xiong Y."/>
            <person name="Zeng A.P."/>
            <person name="Brandt B.W."/>
            <person name="Cornell M.J."/>
            <person name="van den Hondel C.A."/>
            <person name="Visser J."/>
            <person name="Oliver S.G."/>
            <person name="Turner G."/>
        </authorList>
    </citation>
    <scope>GENOME REANNOTATION</scope>
    <source>
        <strain>FGSC A4 / ATCC 38163 / CBS 112.46 / NRRL 194 / M139</strain>
    </source>
</reference>
<keyword id="KW-0106">Calcium</keyword>
<keyword id="KW-0119">Carbohydrate metabolism</keyword>
<keyword id="KW-0961">Cell wall biogenesis/degradation</keyword>
<keyword id="KW-0456">Lyase</keyword>
<keyword id="KW-0624">Polysaccharide degradation</keyword>
<keyword id="KW-1185">Reference proteome</keyword>
<keyword id="KW-0964">Secreted</keyword>
<keyword id="KW-0732">Signal</keyword>
<dbReference type="EC" id="4.2.2.2"/>
<dbReference type="EMBL" id="AACD01000112">
    <property type="protein sequence ID" value="EAA58566.1"/>
    <property type="molecule type" value="Genomic_DNA"/>
</dbReference>
<dbReference type="EMBL" id="BN001301">
    <property type="protein sequence ID" value="CBF71380.1"/>
    <property type="molecule type" value="Genomic_DNA"/>
</dbReference>
<dbReference type="RefSeq" id="XP_664352.1">
    <property type="nucleotide sequence ID" value="XM_659260.1"/>
</dbReference>
<dbReference type="SMR" id="Q5AY82"/>
<dbReference type="STRING" id="227321.Q5AY82"/>
<dbReference type="CAZy" id="PL3">
    <property type="family name" value="Polysaccharide Lyase Family 3"/>
</dbReference>
<dbReference type="EnsemblFungi" id="CBF71380">
    <property type="protein sequence ID" value="CBF71380"/>
    <property type="gene ID" value="ANIA_06748"/>
</dbReference>
<dbReference type="KEGG" id="ani:ANIA_06748"/>
<dbReference type="VEuPathDB" id="FungiDB:AN6748"/>
<dbReference type="HOGENOM" id="CLU_044863_3_0_1"/>
<dbReference type="InParanoid" id="Q5AY82"/>
<dbReference type="OMA" id="FYTMMKR"/>
<dbReference type="OrthoDB" id="441042at2759"/>
<dbReference type="Proteomes" id="UP000000560">
    <property type="component" value="Chromosome I"/>
</dbReference>
<dbReference type="GO" id="GO:0005576">
    <property type="term" value="C:extracellular region"/>
    <property type="evidence" value="ECO:0007669"/>
    <property type="project" value="UniProtKB-SubCell"/>
</dbReference>
<dbReference type="GO" id="GO:0030570">
    <property type="term" value="F:pectate lyase activity"/>
    <property type="evidence" value="ECO:0007669"/>
    <property type="project" value="UniProtKB-EC"/>
</dbReference>
<dbReference type="GO" id="GO:0071555">
    <property type="term" value="P:cell wall organization"/>
    <property type="evidence" value="ECO:0007669"/>
    <property type="project" value="UniProtKB-KW"/>
</dbReference>
<dbReference type="GO" id="GO:0045490">
    <property type="term" value="P:pectin catabolic process"/>
    <property type="evidence" value="ECO:0000318"/>
    <property type="project" value="GO_Central"/>
</dbReference>
<dbReference type="Gene3D" id="2.160.20.10">
    <property type="entry name" value="Single-stranded right-handed beta-helix, Pectin lyase-like"/>
    <property type="match status" value="1"/>
</dbReference>
<dbReference type="InterPro" id="IPR004898">
    <property type="entry name" value="Pectate_lyase_PlyH/PlyE-like"/>
</dbReference>
<dbReference type="InterPro" id="IPR012334">
    <property type="entry name" value="Pectin_lyas_fold"/>
</dbReference>
<dbReference type="InterPro" id="IPR011050">
    <property type="entry name" value="Pectin_lyase_fold/virulence"/>
</dbReference>
<dbReference type="PANTHER" id="PTHR33407">
    <property type="entry name" value="PECTATE LYASE F-RELATED"/>
    <property type="match status" value="1"/>
</dbReference>
<dbReference type="PANTHER" id="PTHR33407:SF11">
    <property type="entry name" value="PECTATE LYASE H-RELATED"/>
    <property type="match status" value="1"/>
</dbReference>
<dbReference type="Pfam" id="PF03211">
    <property type="entry name" value="Pectate_lyase"/>
    <property type="match status" value="1"/>
</dbReference>
<dbReference type="SUPFAM" id="SSF51126">
    <property type="entry name" value="Pectin lyase-like"/>
    <property type="match status" value="1"/>
</dbReference>
<name>PLYG_EMENI</name>
<evidence type="ECO:0000250" key="1"/>
<evidence type="ECO:0000255" key="2"/>
<evidence type="ECO:0000305" key="3"/>
<sequence length="257" mass="26740">MPVLSKLLPTLTLTLPLLAGPCLAAANPKLSKRFTFPIPSSTGSVTFSEPYEIAAGEIYDGELQTFGRGVECTGQDEGGESDTVFIVQEGGTLKNAIIGADQIEGVYCLGACTIENVWWEKVCEDALSLKEGSGPYVVTGGGAQGAEDKVIQHNSEGEVIVDGFTVYDFGKLYRSCGTCGDIQRSATITNVVAVSGSTIAGANGNFGDVVTIDSSNCATDVSAICTTYEADADGGEPEEVSTDVTEACVFEELPACE</sequence>
<gene>
    <name type="primary">plyG</name>
    <name type="ORF">AN6748</name>
</gene>
<protein>
    <recommendedName>
        <fullName>Probable pectate lyase G</fullName>
        <ecNumber>4.2.2.2</ecNumber>
    </recommendedName>
</protein>
<feature type="signal peptide" evidence="2">
    <location>
        <begin position="1"/>
        <end position="24"/>
    </location>
</feature>
<feature type="chain" id="PRO_0000394594" description="Probable pectate lyase G">
    <location>
        <begin position="25"/>
        <end position="257"/>
    </location>
</feature>
<accession>Q5AY82</accession>
<accession>C8V1Y8</accession>
<organism>
    <name type="scientific">Emericella nidulans (strain FGSC A4 / ATCC 38163 / CBS 112.46 / NRRL 194 / M139)</name>
    <name type="common">Aspergillus nidulans</name>
    <dbReference type="NCBI Taxonomy" id="227321"/>
    <lineage>
        <taxon>Eukaryota</taxon>
        <taxon>Fungi</taxon>
        <taxon>Dikarya</taxon>
        <taxon>Ascomycota</taxon>
        <taxon>Pezizomycotina</taxon>
        <taxon>Eurotiomycetes</taxon>
        <taxon>Eurotiomycetidae</taxon>
        <taxon>Eurotiales</taxon>
        <taxon>Aspergillaceae</taxon>
        <taxon>Aspergillus</taxon>
        <taxon>Aspergillus subgen. Nidulantes</taxon>
    </lineage>
</organism>
<proteinExistence type="inferred from homology"/>
<comment type="function">
    <text evidence="1">Pectinolytic enzyme consist of four classes of enzymes: pectin lyase, polygalacturonase, pectin methylesterase and rhamnogalacturonase. Among pectinolytic enzymes, pectin lyase is the most important in depolymerization of pectin, since it cleaves internal glycosidic bonds of highly methylated pectins. Favors pectate, the anion, over pectin, the methyl ester (By similarity).</text>
</comment>
<comment type="catalytic activity">
    <reaction>
        <text>Eliminative cleavage of (1-&gt;4)-alpha-D-galacturonan to give oligosaccharides with 4-deoxy-alpha-D-galact-4-enuronosyl groups at their non-reducing ends.</text>
        <dbReference type="EC" id="4.2.2.2"/>
    </reaction>
</comment>
<comment type="cofactor">
    <cofactor evidence="1">
        <name>Ca(2+)</name>
        <dbReference type="ChEBI" id="CHEBI:29108"/>
    </cofactor>
    <text evidence="1">Binds 1 Ca(2+) ion per subunit.</text>
</comment>
<comment type="subcellular location">
    <subcellularLocation>
        <location evidence="1">Secreted</location>
    </subcellularLocation>
</comment>
<comment type="similarity">
    <text evidence="3">Belongs to the polysaccharide lyase 3 family.</text>
</comment>